<name>IOD3_BOVIN</name>
<organism>
    <name type="scientific">Bos taurus</name>
    <name type="common">Bovine</name>
    <dbReference type="NCBI Taxonomy" id="9913"/>
    <lineage>
        <taxon>Eukaryota</taxon>
        <taxon>Metazoa</taxon>
        <taxon>Chordata</taxon>
        <taxon>Craniata</taxon>
        <taxon>Vertebrata</taxon>
        <taxon>Euteleostomi</taxon>
        <taxon>Mammalia</taxon>
        <taxon>Eutheria</taxon>
        <taxon>Laurasiatheria</taxon>
        <taxon>Artiodactyla</taxon>
        <taxon>Ruminantia</taxon>
        <taxon>Pecora</taxon>
        <taxon>Bovidae</taxon>
        <taxon>Bovinae</taxon>
        <taxon>Bos</taxon>
    </lineage>
</organism>
<accession>Q5I3B1</accession>
<dbReference type="EC" id="1.21.99.3" evidence="1"/>
<dbReference type="EMBL" id="AAFC03027682">
    <property type="status" value="NOT_ANNOTATED_CDS"/>
    <property type="molecule type" value="Genomic_DNA"/>
</dbReference>
<dbReference type="EMBL" id="AY858552">
    <property type="protein sequence ID" value="AAW51124.1"/>
    <property type="status" value="ALT_INIT"/>
    <property type="molecule type" value="mRNA"/>
</dbReference>
<dbReference type="RefSeq" id="NP_001010993.2">
    <property type="nucleotide sequence ID" value="NM_001010993.3"/>
</dbReference>
<dbReference type="FunCoup" id="Q5I3B1">
    <property type="interactions" value="2"/>
</dbReference>
<dbReference type="STRING" id="9913.ENSBTAP00000053144"/>
<dbReference type="PaxDb" id="9913-ENSBTAP00000053144"/>
<dbReference type="Ensembl" id="ENSBTAT00000060550.3">
    <property type="protein sequence ID" value="ENSBTAP00000053144.3"/>
    <property type="gene ID" value="ENSBTAG00000043578.3"/>
</dbReference>
<dbReference type="GeneID" id="494549"/>
<dbReference type="KEGG" id="bta:494549"/>
<dbReference type="CTD" id="1735"/>
<dbReference type="VEuPathDB" id="HostDB:ENSBTAG00000043578"/>
<dbReference type="VGNC" id="VGNC:106711">
    <property type="gene designation" value="DIO3"/>
</dbReference>
<dbReference type="eggNOG" id="ENOG502S5FA">
    <property type="taxonomic scope" value="Eukaryota"/>
</dbReference>
<dbReference type="GeneTree" id="ENSGT00940000154482"/>
<dbReference type="HOGENOM" id="CLU_1717459_0_0_1"/>
<dbReference type="InParanoid" id="Q5I3B1"/>
<dbReference type="OMA" id="CSXPPFM"/>
<dbReference type="OrthoDB" id="428577at2759"/>
<dbReference type="Reactome" id="R-BTA-350864">
    <property type="pathway name" value="Regulation of thyroid hormone activity"/>
</dbReference>
<dbReference type="Proteomes" id="UP000009136">
    <property type="component" value="Chromosome 21"/>
</dbReference>
<dbReference type="Bgee" id="ENSBTAG00000043578">
    <property type="expression patterns" value="Expressed in placenta and 53 other cell types or tissues"/>
</dbReference>
<dbReference type="GO" id="GO:0010008">
    <property type="term" value="C:endosome membrane"/>
    <property type="evidence" value="ECO:0007669"/>
    <property type="project" value="UniProtKB-SubCell"/>
</dbReference>
<dbReference type="GO" id="GO:0005886">
    <property type="term" value="C:plasma membrane"/>
    <property type="evidence" value="ECO:0007669"/>
    <property type="project" value="UniProtKB-SubCell"/>
</dbReference>
<dbReference type="GO" id="GO:0004800">
    <property type="term" value="F:thyroxine 5'-deiodinase activity"/>
    <property type="evidence" value="ECO:0007669"/>
    <property type="project" value="Ensembl"/>
</dbReference>
<dbReference type="GO" id="GO:0033798">
    <property type="term" value="F:thyroxine 5-deiodinase activity"/>
    <property type="evidence" value="ECO:0000250"/>
    <property type="project" value="UniProtKB"/>
</dbReference>
<dbReference type="GO" id="GO:0042446">
    <property type="term" value="P:hormone biosynthetic process"/>
    <property type="evidence" value="ECO:0007669"/>
    <property type="project" value="UniProtKB-KW"/>
</dbReference>
<dbReference type="GO" id="GO:0040018">
    <property type="term" value="P:positive regulation of multicellular organism growth"/>
    <property type="evidence" value="ECO:0007669"/>
    <property type="project" value="Ensembl"/>
</dbReference>
<dbReference type="GO" id="GO:0097474">
    <property type="term" value="P:retinal cone cell apoptotic process"/>
    <property type="evidence" value="ECO:0007669"/>
    <property type="project" value="Ensembl"/>
</dbReference>
<dbReference type="GO" id="GO:0046549">
    <property type="term" value="P:retinal cone cell development"/>
    <property type="evidence" value="ECO:0007669"/>
    <property type="project" value="Ensembl"/>
</dbReference>
<dbReference type="GO" id="GO:0042404">
    <property type="term" value="P:thyroid hormone catabolic process"/>
    <property type="evidence" value="ECO:0000250"/>
    <property type="project" value="UniProtKB"/>
</dbReference>
<dbReference type="GO" id="GO:0042403">
    <property type="term" value="P:thyroid hormone metabolic process"/>
    <property type="evidence" value="ECO:0000318"/>
    <property type="project" value="GO_Central"/>
</dbReference>
<dbReference type="FunFam" id="3.40.30.10:FF:000239">
    <property type="entry name" value="Iodothyronine deiodinase"/>
    <property type="match status" value="1"/>
</dbReference>
<dbReference type="Gene3D" id="3.40.30.10">
    <property type="entry name" value="Glutaredoxin"/>
    <property type="match status" value="1"/>
</dbReference>
<dbReference type="InterPro" id="IPR000643">
    <property type="entry name" value="Iodothyronine_deiodinase"/>
</dbReference>
<dbReference type="InterPro" id="IPR008261">
    <property type="entry name" value="Iodothyronine_deiodinase_AS"/>
</dbReference>
<dbReference type="InterPro" id="IPR027252">
    <property type="entry name" value="Iodothyronine_deiodinase_I/III"/>
</dbReference>
<dbReference type="InterPro" id="IPR036249">
    <property type="entry name" value="Thioredoxin-like_sf"/>
</dbReference>
<dbReference type="PANTHER" id="PTHR11781">
    <property type="entry name" value="IODOTHYRONINE DEIODINASE"/>
    <property type="match status" value="1"/>
</dbReference>
<dbReference type="PANTHER" id="PTHR11781:SF4">
    <property type="entry name" value="THYROXINE 5-DEIODINASE"/>
    <property type="match status" value="1"/>
</dbReference>
<dbReference type="Pfam" id="PF00837">
    <property type="entry name" value="T4_deiodinase"/>
    <property type="match status" value="1"/>
</dbReference>
<dbReference type="PIRSF" id="PIRSF001330">
    <property type="entry name" value="IOD"/>
    <property type="match status" value="1"/>
</dbReference>
<dbReference type="PIRSF" id="PIRSF500144">
    <property type="entry name" value="IODI_III"/>
    <property type="match status" value="1"/>
</dbReference>
<dbReference type="SUPFAM" id="SSF52833">
    <property type="entry name" value="Thioredoxin-like"/>
    <property type="match status" value="1"/>
</dbReference>
<dbReference type="PROSITE" id="PS01205">
    <property type="entry name" value="T4_DEIODINASE"/>
    <property type="match status" value="1"/>
</dbReference>
<comment type="function">
    <text evidence="1">Plays a crucial role in the metabolism of thyroid hormones (TH) and has specific roles in TH activation and inactivation by deiodination (By similarity). Catalyzes the deiodination of L-thyroxine (T4) to 3,3',5'-triiodothyronine (rT3), 3,5,3'-triiodothyronine (T3) to 3,3'-diiodothyronine (3,3'-T2), 3,5-diiodothyronine (3,5-T2) to 3-monoiodothyronine (3-T1), rT3 to 3',5'-diiodothyronine (3',5'-T2) and 3,3'-T2 to 3'-monoiodothyronine (3'-T1) via inner-ring deiodination (IRD) (By similarity). Catalyzes the deiodination of 3-T1 to L-thyronine (T0) via outer-ring deiodination (ORD) (By similarity). Catalyzes the tyrosyl ring deiodinations of 3,3',5,5'-tetraiodothyronamine, 3,3',5'-triiodothyronamine, 3,5,3'-triiodothyronamine, 3,5-diiodothyronamine, 3,3'-diiodothyronamine and 3-iodothyronamine (By similarity).</text>
</comment>
<comment type="catalytic activity">
    <reaction evidence="1">
        <text>3,3',5'-triiodo-L-thyronine + iodide + A + H(+) = L-thyroxine + AH2</text>
        <dbReference type="Rhea" id="RHEA:18897"/>
        <dbReference type="ChEBI" id="CHEBI:13193"/>
        <dbReference type="ChEBI" id="CHEBI:15378"/>
        <dbReference type="ChEBI" id="CHEBI:16382"/>
        <dbReference type="ChEBI" id="CHEBI:17499"/>
        <dbReference type="ChEBI" id="CHEBI:57261"/>
        <dbReference type="ChEBI" id="CHEBI:58448"/>
        <dbReference type="EC" id="1.21.99.3"/>
    </reaction>
    <physiologicalReaction direction="right-to-left" evidence="1">
        <dbReference type="Rhea" id="RHEA:18899"/>
    </physiologicalReaction>
</comment>
<comment type="catalytic activity">
    <reaction evidence="1">
        <text>3,3'-diiodo-L-thyronine + iodide + A + H(+) = 3,3',5-triiodo-L-thyronine + AH2</text>
        <dbReference type="Rhea" id="RHEA:82571"/>
        <dbReference type="ChEBI" id="CHEBI:13193"/>
        <dbReference type="ChEBI" id="CHEBI:15378"/>
        <dbReference type="ChEBI" id="CHEBI:16382"/>
        <dbReference type="ChEBI" id="CHEBI:17499"/>
        <dbReference type="ChEBI" id="CHEBI:176514"/>
        <dbReference type="ChEBI" id="CHEBI:533015"/>
    </reaction>
    <physiologicalReaction direction="right-to-left" evidence="1">
        <dbReference type="Rhea" id="RHEA:82573"/>
    </physiologicalReaction>
</comment>
<comment type="catalytic activity">
    <reaction evidence="1">
        <text>3-iodo-L-thyronine + iodide + A + H(+) = 3,5-diiodo-L-thyronine + AH2</text>
        <dbReference type="Rhea" id="RHEA:82895"/>
        <dbReference type="ChEBI" id="CHEBI:13193"/>
        <dbReference type="ChEBI" id="CHEBI:15378"/>
        <dbReference type="ChEBI" id="CHEBI:16382"/>
        <dbReference type="ChEBI" id="CHEBI:17499"/>
        <dbReference type="ChEBI" id="CHEBI:232626"/>
        <dbReference type="ChEBI" id="CHEBI:232627"/>
    </reaction>
    <physiologicalReaction direction="right-to-left" evidence="1">
        <dbReference type="Rhea" id="RHEA:82897"/>
    </physiologicalReaction>
</comment>
<comment type="catalytic activity">
    <reaction evidence="1">
        <text>L-thyronine + iodide + A + H(+) = 3-iodo-L-thyronine + AH2</text>
        <dbReference type="Rhea" id="RHEA:83771"/>
        <dbReference type="ChEBI" id="CHEBI:13193"/>
        <dbReference type="ChEBI" id="CHEBI:15378"/>
        <dbReference type="ChEBI" id="CHEBI:16382"/>
        <dbReference type="ChEBI" id="CHEBI:17499"/>
        <dbReference type="ChEBI" id="CHEBI:232627"/>
        <dbReference type="ChEBI" id="CHEBI:233333"/>
    </reaction>
    <physiologicalReaction direction="right-to-left" evidence="1">
        <dbReference type="Rhea" id="RHEA:83773"/>
    </physiologicalReaction>
</comment>
<comment type="catalytic activity">
    <reaction evidence="1">
        <text>3',5'-diiodo-L-thyronine + iodide + A + H(+) = 3,3',5'-triiodo-L-thyronine + AH2</text>
        <dbReference type="Rhea" id="RHEA:83775"/>
        <dbReference type="ChEBI" id="CHEBI:13193"/>
        <dbReference type="ChEBI" id="CHEBI:15378"/>
        <dbReference type="ChEBI" id="CHEBI:16382"/>
        <dbReference type="ChEBI" id="CHEBI:17499"/>
        <dbReference type="ChEBI" id="CHEBI:57261"/>
        <dbReference type="ChEBI" id="CHEBI:195762"/>
    </reaction>
    <physiologicalReaction direction="right-to-left" evidence="1">
        <dbReference type="Rhea" id="RHEA:83777"/>
    </physiologicalReaction>
</comment>
<comment type="catalytic activity">
    <reaction evidence="1">
        <text>3'-iodo-L-thyronine + iodide + A + H(+) = 3,3'-diiodo-L-thyronine + AH2</text>
        <dbReference type="Rhea" id="RHEA:83779"/>
        <dbReference type="ChEBI" id="CHEBI:13193"/>
        <dbReference type="ChEBI" id="CHEBI:15378"/>
        <dbReference type="ChEBI" id="CHEBI:16382"/>
        <dbReference type="ChEBI" id="CHEBI:17499"/>
        <dbReference type="ChEBI" id="CHEBI:176514"/>
        <dbReference type="ChEBI" id="CHEBI:232695"/>
    </reaction>
    <physiologicalReaction direction="right-to-left" evidence="1">
        <dbReference type="Rhea" id="RHEA:83781"/>
    </physiologicalReaction>
</comment>
<comment type="catalytic activity">
    <reaction evidence="1">
        <text>3,3',5'-triiodothyronamine + iodide + A + H(+) = 3,3',5,5'-tetraiodothyronamine + AH2</text>
        <dbReference type="Rhea" id="RHEA:83807"/>
        <dbReference type="ChEBI" id="CHEBI:13193"/>
        <dbReference type="ChEBI" id="CHEBI:15378"/>
        <dbReference type="ChEBI" id="CHEBI:16382"/>
        <dbReference type="ChEBI" id="CHEBI:17499"/>
        <dbReference type="ChEBI" id="CHEBI:233343"/>
        <dbReference type="ChEBI" id="CHEBI:233344"/>
    </reaction>
    <physiologicalReaction direction="right-to-left" evidence="1">
        <dbReference type="Rhea" id="RHEA:83809"/>
    </physiologicalReaction>
</comment>
<comment type="catalytic activity">
    <reaction evidence="1">
        <text>3',5'-diiodothyronamine + iodide + A + H(+) = 3,3',5'-triiodothyronamine + AH2</text>
        <dbReference type="Rhea" id="RHEA:83799"/>
        <dbReference type="ChEBI" id="CHEBI:13193"/>
        <dbReference type="ChEBI" id="CHEBI:15378"/>
        <dbReference type="ChEBI" id="CHEBI:16382"/>
        <dbReference type="ChEBI" id="CHEBI:17499"/>
        <dbReference type="ChEBI" id="CHEBI:233342"/>
        <dbReference type="ChEBI" id="CHEBI:233343"/>
    </reaction>
    <physiologicalReaction direction="right-to-left" evidence="1">
        <dbReference type="Rhea" id="RHEA:83801"/>
    </physiologicalReaction>
</comment>
<comment type="catalytic activity">
    <reaction evidence="1">
        <text>3,3'-diiodothyronamine + iodide + A + H(+) = 3,3',5-triiodothyronamine + AH2</text>
        <dbReference type="Rhea" id="RHEA:83811"/>
        <dbReference type="ChEBI" id="CHEBI:13193"/>
        <dbReference type="ChEBI" id="CHEBI:15378"/>
        <dbReference type="ChEBI" id="CHEBI:16382"/>
        <dbReference type="ChEBI" id="CHEBI:17499"/>
        <dbReference type="ChEBI" id="CHEBI:233341"/>
        <dbReference type="ChEBI" id="CHEBI:233426"/>
    </reaction>
    <physiologicalReaction direction="right-to-left" evidence="1">
        <dbReference type="Rhea" id="RHEA:83813"/>
    </physiologicalReaction>
</comment>
<comment type="catalytic activity">
    <reaction evidence="1">
        <text>3-iodothyronamine + iodide + A + H(+) = 3,5-diiodothyronamine + AH2</text>
        <dbReference type="Rhea" id="RHEA:83823"/>
        <dbReference type="ChEBI" id="CHEBI:13193"/>
        <dbReference type="ChEBI" id="CHEBI:15378"/>
        <dbReference type="ChEBI" id="CHEBI:16382"/>
        <dbReference type="ChEBI" id="CHEBI:17499"/>
        <dbReference type="ChEBI" id="CHEBI:231647"/>
        <dbReference type="ChEBI" id="CHEBI:233340"/>
    </reaction>
    <physiologicalReaction direction="right-to-left" evidence="1">
        <dbReference type="Rhea" id="RHEA:83825"/>
    </physiologicalReaction>
</comment>
<comment type="catalytic activity">
    <reaction evidence="1">
        <text>3'-iodothyronamine + iodide + A + H(+) = 3,3'-diiodothyronamine + AH2</text>
        <dbReference type="Rhea" id="RHEA:83815"/>
        <dbReference type="ChEBI" id="CHEBI:13193"/>
        <dbReference type="ChEBI" id="CHEBI:15378"/>
        <dbReference type="ChEBI" id="CHEBI:16382"/>
        <dbReference type="ChEBI" id="CHEBI:17499"/>
        <dbReference type="ChEBI" id="CHEBI:233339"/>
        <dbReference type="ChEBI" id="CHEBI:233341"/>
    </reaction>
    <physiologicalReaction direction="right-to-left" evidence="1">
        <dbReference type="Rhea" id="RHEA:83817"/>
    </physiologicalReaction>
</comment>
<comment type="catalytic activity">
    <reaction evidence="1">
        <text>thyronamine + iodide + A + H(+) = 3-iodothyronamine + AH2</text>
        <dbReference type="Rhea" id="RHEA:83819"/>
        <dbReference type="ChEBI" id="CHEBI:13193"/>
        <dbReference type="ChEBI" id="CHEBI:15378"/>
        <dbReference type="ChEBI" id="CHEBI:16382"/>
        <dbReference type="ChEBI" id="CHEBI:17499"/>
        <dbReference type="ChEBI" id="CHEBI:231647"/>
        <dbReference type="ChEBI" id="CHEBI:233334"/>
    </reaction>
    <physiologicalReaction direction="right-to-left" evidence="1">
        <dbReference type="Rhea" id="RHEA:83821"/>
    </physiologicalReaction>
</comment>
<comment type="subunit">
    <text evidence="1">Monomer. Homodimer. May undergo minor heretodimerization with DIO1 and DIO2 (By similarity).</text>
</comment>
<comment type="subcellular location">
    <subcellularLocation>
        <location evidence="1">Cell membrane</location>
        <topology evidence="2">Single-pass type II membrane protein</topology>
    </subcellularLocation>
    <subcellularLocation>
        <location evidence="1">Endosome membrane</location>
        <topology evidence="2">Single-pass type II membrane protein</topology>
    </subcellularLocation>
</comment>
<comment type="tissue specificity">
    <text evidence="3">Highly expressed in mammary gland. Detected at lower levels in kidney, and at very low levels in the other tissues.</text>
</comment>
<comment type="similarity">
    <text evidence="4">Belongs to the iodothyronine deiodinase family.</text>
</comment>
<comment type="caution">
    <text evidence="4">It is uncertain whether Met-1 or Met-24 is the initiator.</text>
</comment>
<comment type="sequence caution" evidence="4">
    <conflict type="erroneous initiation">
        <sequence resource="EMBL-CDS" id="AAW51124"/>
    </conflict>
    <text>Truncated N-terminus.</text>
</comment>
<keyword id="KW-1003">Cell membrane</keyword>
<keyword id="KW-0967">Endosome</keyword>
<keyword id="KW-0472">Membrane</keyword>
<keyword id="KW-0560">Oxidoreductase</keyword>
<keyword id="KW-1185">Reference proteome</keyword>
<keyword id="KW-0712">Selenocysteine</keyword>
<keyword id="KW-0735">Signal-anchor</keyword>
<keyword id="KW-0893">Thyroid hormones biosynthesis</keyword>
<keyword id="KW-0812">Transmembrane</keyword>
<keyword id="KW-1133">Transmembrane helix</keyword>
<sequence length="301" mass="33888">MSRQAAPRWVVGEGRGTLGGAATMLRSLLLHSLRLCSQTASCLVLFPRFLGTAFMLWLLDFLCIRKHLLGRRRRGQPEIEVELNSDGEEVPPDDPPVCVSDDNRLCTLASLRAVWHGQKLDFFKQAHEGGPAPNSEVVLPDGFQNQHILDYARGNRPLVLNFGSCTUPPFMARMSAFQRLVTKYQRDVDFLIIYIEEAHPSDGWVTTDSPYSIPQHRSLEDRVSAARVLQQGAPECALVLDTMTNSSSSAYGAYFERLYIIQSGTIMYQGGRGPDGYQVSEVRTWLERYDEQLHGPQPRRV</sequence>
<protein>
    <recommendedName>
        <fullName>Thyroxine 5-deiodinase</fullName>
        <ecNumber evidence="1">1.21.99.3</ecNumber>
    </recommendedName>
    <alternativeName>
        <fullName>5DIII</fullName>
    </alternativeName>
    <alternativeName>
        <fullName>DIOIII</fullName>
    </alternativeName>
    <alternativeName>
        <fullName>Type 3 DI</fullName>
    </alternativeName>
    <alternativeName>
        <fullName>Type III iodothyronine deiodinase</fullName>
    </alternativeName>
</protein>
<feature type="chain" id="PRO_0000223867" description="Thyroxine 5-deiodinase">
    <location>
        <begin position="1"/>
        <end position="301"/>
    </location>
</feature>
<feature type="topological domain" description="Cytoplasmic" evidence="2">
    <location>
        <begin position="1"/>
        <end position="41"/>
    </location>
</feature>
<feature type="transmembrane region" description="Helical; Signal-anchor for type II membrane protein" evidence="2">
    <location>
        <begin position="42"/>
        <end position="64"/>
    </location>
</feature>
<feature type="topological domain" description="Extracellular" evidence="2">
    <location>
        <begin position="65"/>
        <end position="301"/>
    </location>
</feature>
<feature type="active site" evidence="1">
    <location>
        <position position="167"/>
    </location>
</feature>
<feature type="non-standard amino acid" description="Selenocysteine" evidence="1">
    <location>
        <position position="167"/>
    </location>
</feature>
<evidence type="ECO:0000250" key="1">
    <source>
        <dbReference type="UniProtKB" id="P55073"/>
    </source>
</evidence>
<evidence type="ECO:0000255" key="2"/>
<evidence type="ECO:0000269" key="3">
    <source>
    </source>
</evidence>
<evidence type="ECO:0000305" key="4"/>
<reference key="1">
    <citation type="journal article" date="2009" name="Genome Biol.">
        <title>A whole-genome assembly of the domestic cow, Bos taurus.</title>
        <authorList>
            <person name="Zimin A.V."/>
            <person name="Delcher A.L."/>
            <person name="Florea L."/>
            <person name="Kelley D.R."/>
            <person name="Schatz M.C."/>
            <person name="Puiu D."/>
            <person name="Hanrahan F."/>
            <person name="Pertea G."/>
            <person name="Van Tassell C.P."/>
            <person name="Sonstegard T.S."/>
            <person name="Marcais G."/>
            <person name="Roberts M."/>
            <person name="Subramanian P."/>
            <person name="Yorke J.A."/>
            <person name="Salzberg S.L."/>
        </authorList>
    </citation>
    <scope>NUCLEOTIDE SEQUENCE [LARGE SCALE GENOMIC DNA]</scope>
    <source>
        <strain>Hereford</strain>
    </source>
</reference>
<reference key="2">
    <citation type="journal article" date="2005" name="Anim. Genet.">
        <title>Molecular cloning, expression and radiation hybrid mapping of the bovine deiodinase type II (DIO2) and deiodinase type III (DIO3) genes.</title>
        <authorList>
            <person name="Connor E.E."/>
            <person name="Laiakis E.C."/>
            <person name="Fernandes V.M."/>
            <person name="Williams J.L."/>
            <person name="Capuco A.V."/>
        </authorList>
    </citation>
    <scope>NUCLEOTIDE SEQUENCE [MRNA] OF 19-301</scope>
    <scope>TISSUE SPECIFICITY</scope>
    <source>
        <tissue>Mammary epithelium</tissue>
    </source>
</reference>
<gene>
    <name type="primary">DIO3</name>
</gene>
<proteinExistence type="evidence at transcript level"/>